<keyword id="KW-1185">Reference proteome</keyword>
<keyword id="KW-0687">Ribonucleoprotein</keyword>
<keyword id="KW-0689">Ribosomal protein</keyword>
<keyword id="KW-0694">RNA-binding</keyword>
<keyword id="KW-0699">rRNA-binding</keyword>
<protein>
    <recommendedName>
        <fullName evidence="1">Large ribosomal subunit protein uL23</fullName>
    </recommendedName>
    <alternativeName>
        <fullName evidence="2">50S ribosomal protein L23</fullName>
    </alternativeName>
</protein>
<evidence type="ECO:0000255" key="1">
    <source>
        <dbReference type="HAMAP-Rule" id="MF_01369"/>
    </source>
</evidence>
<evidence type="ECO:0000305" key="2"/>
<feature type="chain" id="PRO_1000068095" description="Large ribosomal subunit protein uL23">
    <location>
        <begin position="1"/>
        <end position="98"/>
    </location>
</feature>
<organism>
    <name type="scientific">Limosilactobacillus reuteri (strain DSM 20016)</name>
    <name type="common">Lactobacillus reuteri</name>
    <dbReference type="NCBI Taxonomy" id="557436"/>
    <lineage>
        <taxon>Bacteria</taxon>
        <taxon>Bacillati</taxon>
        <taxon>Bacillota</taxon>
        <taxon>Bacilli</taxon>
        <taxon>Lactobacillales</taxon>
        <taxon>Lactobacillaceae</taxon>
        <taxon>Limosilactobacillus</taxon>
    </lineage>
</organism>
<sequence length="98" mass="11250">MEARDIILRPVVTEASMAGMDNKRYTFDVDLRATKTQVKNAVEEIFGVKVVKVNIMNVKGKLKRQGRYEGYTKRRRKAIVTLSADSNEIKLFNDNNEN</sequence>
<proteinExistence type="inferred from homology"/>
<reference key="1">
    <citation type="journal article" date="2011" name="PLoS Genet.">
        <title>The evolution of host specialization in the vertebrate gut symbiont Lactobacillus reuteri.</title>
        <authorList>
            <person name="Frese S.A."/>
            <person name="Benson A.K."/>
            <person name="Tannock G.W."/>
            <person name="Loach D.M."/>
            <person name="Kim J."/>
            <person name="Zhang M."/>
            <person name="Oh P.L."/>
            <person name="Heng N.C."/>
            <person name="Patil P.B."/>
            <person name="Juge N."/>
            <person name="Mackenzie D.A."/>
            <person name="Pearson B.M."/>
            <person name="Lapidus A."/>
            <person name="Dalin E."/>
            <person name="Tice H."/>
            <person name="Goltsman E."/>
            <person name="Land M."/>
            <person name="Hauser L."/>
            <person name="Ivanova N."/>
            <person name="Kyrpides N.C."/>
            <person name="Walter J."/>
        </authorList>
    </citation>
    <scope>NUCLEOTIDE SEQUENCE [LARGE SCALE GENOMIC DNA]</scope>
    <source>
        <strain>DSM 20016</strain>
    </source>
</reference>
<gene>
    <name evidence="1" type="primary">rplW</name>
    <name type="ordered locus">Lreu_1481</name>
</gene>
<dbReference type="EMBL" id="CP000705">
    <property type="protein sequence ID" value="ABQ83727.1"/>
    <property type="molecule type" value="Genomic_DNA"/>
</dbReference>
<dbReference type="RefSeq" id="WP_003664564.1">
    <property type="nucleotide sequence ID" value="NZ_AZDD01000010.1"/>
</dbReference>
<dbReference type="SMR" id="A5VLK3"/>
<dbReference type="STRING" id="557436.Lreu_1481"/>
<dbReference type="GeneID" id="77191477"/>
<dbReference type="KEGG" id="lre:Lreu_1481"/>
<dbReference type="PATRIC" id="fig|557436.17.peg.142"/>
<dbReference type="eggNOG" id="COG0089">
    <property type="taxonomic scope" value="Bacteria"/>
</dbReference>
<dbReference type="HOGENOM" id="CLU_037562_3_2_9"/>
<dbReference type="Proteomes" id="UP000001991">
    <property type="component" value="Chromosome"/>
</dbReference>
<dbReference type="GO" id="GO:1990904">
    <property type="term" value="C:ribonucleoprotein complex"/>
    <property type="evidence" value="ECO:0007669"/>
    <property type="project" value="UniProtKB-KW"/>
</dbReference>
<dbReference type="GO" id="GO:0005840">
    <property type="term" value="C:ribosome"/>
    <property type="evidence" value="ECO:0007669"/>
    <property type="project" value="UniProtKB-KW"/>
</dbReference>
<dbReference type="GO" id="GO:0019843">
    <property type="term" value="F:rRNA binding"/>
    <property type="evidence" value="ECO:0007669"/>
    <property type="project" value="UniProtKB-UniRule"/>
</dbReference>
<dbReference type="GO" id="GO:0003735">
    <property type="term" value="F:structural constituent of ribosome"/>
    <property type="evidence" value="ECO:0007669"/>
    <property type="project" value="InterPro"/>
</dbReference>
<dbReference type="GO" id="GO:0006412">
    <property type="term" value="P:translation"/>
    <property type="evidence" value="ECO:0007669"/>
    <property type="project" value="UniProtKB-UniRule"/>
</dbReference>
<dbReference type="FunFam" id="3.30.70.330:FF:000001">
    <property type="entry name" value="50S ribosomal protein L23"/>
    <property type="match status" value="1"/>
</dbReference>
<dbReference type="Gene3D" id="3.30.70.330">
    <property type="match status" value="1"/>
</dbReference>
<dbReference type="HAMAP" id="MF_01369_B">
    <property type="entry name" value="Ribosomal_uL23_B"/>
    <property type="match status" value="1"/>
</dbReference>
<dbReference type="InterPro" id="IPR012677">
    <property type="entry name" value="Nucleotide-bd_a/b_plait_sf"/>
</dbReference>
<dbReference type="InterPro" id="IPR013025">
    <property type="entry name" value="Ribosomal_uL23-like"/>
</dbReference>
<dbReference type="InterPro" id="IPR012678">
    <property type="entry name" value="Ribosomal_uL23/eL15/eS24_sf"/>
</dbReference>
<dbReference type="InterPro" id="IPR001014">
    <property type="entry name" value="Ribosomal_uL23_CS"/>
</dbReference>
<dbReference type="NCBIfam" id="NF004363">
    <property type="entry name" value="PRK05738.2-4"/>
    <property type="match status" value="1"/>
</dbReference>
<dbReference type="PANTHER" id="PTHR11620">
    <property type="entry name" value="60S RIBOSOMAL PROTEIN L23A"/>
    <property type="match status" value="1"/>
</dbReference>
<dbReference type="Pfam" id="PF00276">
    <property type="entry name" value="Ribosomal_L23"/>
    <property type="match status" value="1"/>
</dbReference>
<dbReference type="SUPFAM" id="SSF54189">
    <property type="entry name" value="Ribosomal proteins S24e, L23 and L15e"/>
    <property type="match status" value="1"/>
</dbReference>
<dbReference type="PROSITE" id="PS00050">
    <property type="entry name" value="RIBOSOMAL_L23"/>
    <property type="match status" value="1"/>
</dbReference>
<accession>A5VLK3</accession>
<name>RL23_LIMRD</name>
<comment type="function">
    <text evidence="1">One of the early assembly proteins it binds 23S rRNA. One of the proteins that surrounds the polypeptide exit tunnel on the outside of the ribosome. Forms the main docking site for trigger factor binding to the ribosome.</text>
</comment>
<comment type="subunit">
    <text evidence="1">Part of the 50S ribosomal subunit. Contacts protein L29, and trigger factor when it is bound to the ribosome.</text>
</comment>
<comment type="similarity">
    <text evidence="1">Belongs to the universal ribosomal protein uL23 family.</text>
</comment>